<gene>
    <name evidence="1" type="primary">purQ</name>
    <name type="ordered locus">MmarC7_1178</name>
</gene>
<sequence>MIKVVPKVLVMSGYGINCETETAHTFQKAGAKTDIVHINDLIAGKKKMADYEIIMFPGGFSYGDDTGSGNAFANKIKNNLFDDLKEFINSGKLILGICNGFQVMTNLGLFALPSTDYGERISALEANTNNRYECRWVHIKENESICVFTKGIDIIHVPIAHGEGRFYCDEKTYLELKENKQIVFTYCDSEGNPANKEYPLNPNGAYYDIAGICDKSGRIMGLMPHPERSLYSISEPEYQLKKEIAKRNGEIIPEFIESNIQIFKNAVEYFNK</sequence>
<accession>A6VIG8</accession>
<reference key="1">
    <citation type="submission" date="2007-06" db="EMBL/GenBank/DDBJ databases">
        <title>Complete sequence of Methanococcus maripaludis C7.</title>
        <authorList>
            <consortium name="US DOE Joint Genome Institute"/>
            <person name="Copeland A."/>
            <person name="Lucas S."/>
            <person name="Lapidus A."/>
            <person name="Barry K."/>
            <person name="Glavina del Rio T."/>
            <person name="Dalin E."/>
            <person name="Tice H."/>
            <person name="Pitluck S."/>
            <person name="Clum A."/>
            <person name="Schmutz J."/>
            <person name="Larimer F."/>
            <person name="Land M."/>
            <person name="Hauser L."/>
            <person name="Kyrpides N."/>
            <person name="Anderson I."/>
            <person name="Sieprawska-Lupa M."/>
            <person name="Whitman W.B."/>
            <person name="Richardson P."/>
        </authorList>
    </citation>
    <scope>NUCLEOTIDE SEQUENCE [LARGE SCALE GENOMIC DNA]</scope>
    <source>
        <strain>C7 / ATCC BAA-1331</strain>
    </source>
</reference>
<evidence type="ECO:0000255" key="1">
    <source>
        <dbReference type="HAMAP-Rule" id="MF_00421"/>
    </source>
</evidence>
<proteinExistence type="inferred from homology"/>
<dbReference type="EC" id="6.3.5.3" evidence="1"/>
<dbReference type="EC" id="3.5.1.2" evidence="1"/>
<dbReference type="EMBL" id="CP000745">
    <property type="protein sequence ID" value="ABR66244.1"/>
    <property type="molecule type" value="Genomic_DNA"/>
</dbReference>
<dbReference type="SMR" id="A6VIG8"/>
<dbReference type="STRING" id="426368.MmarC7_1178"/>
<dbReference type="KEGG" id="mmz:MmarC7_1178"/>
<dbReference type="eggNOG" id="arCOG00102">
    <property type="taxonomic scope" value="Archaea"/>
</dbReference>
<dbReference type="HOGENOM" id="CLU_001031_3_0_2"/>
<dbReference type="UniPathway" id="UPA00074">
    <property type="reaction ID" value="UER00128"/>
</dbReference>
<dbReference type="GO" id="GO:0005737">
    <property type="term" value="C:cytoplasm"/>
    <property type="evidence" value="ECO:0007669"/>
    <property type="project" value="UniProtKB-SubCell"/>
</dbReference>
<dbReference type="GO" id="GO:0005524">
    <property type="term" value="F:ATP binding"/>
    <property type="evidence" value="ECO:0007669"/>
    <property type="project" value="UniProtKB-KW"/>
</dbReference>
<dbReference type="GO" id="GO:0004359">
    <property type="term" value="F:glutaminase activity"/>
    <property type="evidence" value="ECO:0007669"/>
    <property type="project" value="UniProtKB-EC"/>
</dbReference>
<dbReference type="GO" id="GO:0004642">
    <property type="term" value="F:phosphoribosylformylglycinamidine synthase activity"/>
    <property type="evidence" value="ECO:0007669"/>
    <property type="project" value="UniProtKB-UniRule"/>
</dbReference>
<dbReference type="GO" id="GO:0006189">
    <property type="term" value="P:'de novo' IMP biosynthetic process"/>
    <property type="evidence" value="ECO:0007669"/>
    <property type="project" value="UniProtKB-UniRule"/>
</dbReference>
<dbReference type="CDD" id="cd01740">
    <property type="entry name" value="GATase1_FGAR_AT"/>
    <property type="match status" value="1"/>
</dbReference>
<dbReference type="Gene3D" id="3.40.50.880">
    <property type="match status" value="1"/>
</dbReference>
<dbReference type="HAMAP" id="MF_00421">
    <property type="entry name" value="PurQ"/>
    <property type="match status" value="1"/>
</dbReference>
<dbReference type="InterPro" id="IPR029062">
    <property type="entry name" value="Class_I_gatase-like"/>
</dbReference>
<dbReference type="InterPro" id="IPR010075">
    <property type="entry name" value="PRibForGlyAmidine_synth_PurQ"/>
</dbReference>
<dbReference type="NCBIfam" id="TIGR01737">
    <property type="entry name" value="FGAM_synth_I"/>
    <property type="match status" value="1"/>
</dbReference>
<dbReference type="PANTHER" id="PTHR10099">
    <property type="entry name" value="PHOSPHORIBOSYLFORMYLGLYCINAMIDINE SYNTHASE"/>
    <property type="match status" value="1"/>
</dbReference>
<dbReference type="PANTHER" id="PTHR10099:SF1">
    <property type="entry name" value="PHOSPHORIBOSYLFORMYLGLYCINAMIDINE SYNTHASE"/>
    <property type="match status" value="1"/>
</dbReference>
<dbReference type="Pfam" id="PF13507">
    <property type="entry name" value="GATase_5"/>
    <property type="match status" value="1"/>
</dbReference>
<dbReference type="PIRSF" id="PIRSF001586">
    <property type="entry name" value="FGAM_synth_I"/>
    <property type="match status" value="1"/>
</dbReference>
<dbReference type="SMART" id="SM01211">
    <property type="entry name" value="GATase_5"/>
    <property type="match status" value="1"/>
</dbReference>
<dbReference type="SUPFAM" id="SSF52317">
    <property type="entry name" value="Class I glutamine amidotransferase-like"/>
    <property type="match status" value="1"/>
</dbReference>
<dbReference type="PROSITE" id="PS51273">
    <property type="entry name" value="GATASE_TYPE_1"/>
    <property type="match status" value="1"/>
</dbReference>
<name>PURQ_METM7</name>
<organism>
    <name type="scientific">Methanococcus maripaludis (strain C7 / ATCC BAA-1331)</name>
    <dbReference type="NCBI Taxonomy" id="426368"/>
    <lineage>
        <taxon>Archaea</taxon>
        <taxon>Methanobacteriati</taxon>
        <taxon>Methanobacteriota</taxon>
        <taxon>Methanomada group</taxon>
        <taxon>Methanococci</taxon>
        <taxon>Methanococcales</taxon>
        <taxon>Methanococcaceae</taxon>
        <taxon>Methanococcus</taxon>
    </lineage>
</organism>
<feature type="chain" id="PRO_1000124128" description="Phosphoribosylformylglycinamidine synthase subunit PurQ">
    <location>
        <begin position="1"/>
        <end position="272"/>
    </location>
</feature>
<feature type="domain" description="Glutamine amidotransferase type-1" evidence="1">
    <location>
        <begin position="8"/>
        <end position="243"/>
    </location>
</feature>
<feature type="active site" description="Nucleophile" evidence="1">
    <location>
        <position position="98"/>
    </location>
</feature>
<feature type="active site" evidence="1">
    <location>
        <position position="225"/>
    </location>
</feature>
<feature type="active site" evidence="1">
    <location>
        <position position="227"/>
    </location>
</feature>
<feature type="active site" evidence="1">
    <location>
        <position position="235"/>
    </location>
</feature>
<protein>
    <recommendedName>
        <fullName evidence="1">Phosphoribosylformylglycinamidine synthase subunit PurQ</fullName>
        <shortName evidence="1">FGAM synthase</shortName>
        <ecNumber evidence="1">6.3.5.3</ecNumber>
    </recommendedName>
    <alternativeName>
        <fullName evidence="1">Formylglycinamide ribonucleotide amidotransferase subunit I</fullName>
        <shortName evidence="1">FGAR amidotransferase I</shortName>
        <shortName evidence="1">FGAR-AT I</shortName>
    </alternativeName>
    <alternativeName>
        <fullName evidence="1">Glutaminase PurQ</fullName>
        <ecNumber evidence="1">3.5.1.2</ecNumber>
    </alternativeName>
    <alternativeName>
        <fullName evidence="1">Phosphoribosylformylglycinamidine synthase subunit I</fullName>
    </alternativeName>
</protein>
<comment type="function">
    <text evidence="1">Part of the phosphoribosylformylglycinamidine synthase complex involved in the purines biosynthetic pathway. Catalyzes the ATP-dependent conversion of formylglycinamide ribonucleotide (FGAR) and glutamine to yield formylglycinamidine ribonucleotide (FGAM) and glutamate. The FGAM synthase complex is composed of three subunits. PurQ produces an ammonia molecule by converting glutamine to glutamate. PurL transfers the ammonia molecule to FGAR to form FGAM in an ATP-dependent manner. PurS interacts with PurQ and PurL and is thought to assist in the transfer of the ammonia molecule from PurQ to PurL.</text>
</comment>
<comment type="catalytic activity">
    <reaction evidence="1">
        <text>N(2)-formyl-N(1)-(5-phospho-beta-D-ribosyl)glycinamide + L-glutamine + ATP + H2O = 2-formamido-N(1)-(5-O-phospho-beta-D-ribosyl)acetamidine + L-glutamate + ADP + phosphate + H(+)</text>
        <dbReference type="Rhea" id="RHEA:17129"/>
        <dbReference type="ChEBI" id="CHEBI:15377"/>
        <dbReference type="ChEBI" id="CHEBI:15378"/>
        <dbReference type="ChEBI" id="CHEBI:29985"/>
        <dbReference type="ChEBI" id="CHEBI:30616"/>
        <dbReference type="ChEBI" id="CHEBI:43474"/>
        <dbReference type="ChEBI" id="CHEBI:58359"/>
        <dbReference type="ChEBI" id="CHEBI:147286"/>
        <dbReference type="ChEBI" id="CHEBI:147287"/>
        <dbReference type="ChEBI" id="CHEBI:456216"/>
        <dbReference type="EC" id="6.3.5.3"/>
    </reaction>
</comment>
<comment type="catalytic activity">
    <reaction evidence="1">
        <text>L-glutamine + H2O = L-glutamate + NH4(+)</text>
        <dbReference type="Rhea" id="RHEA:15889"/>
        <dbReference type="ChEBI" id="CHEBI:15377"/>
        <dbReference type="ChEBI" id="CHEBI:28938"/>
        <dbReference type="ChEBI" id="CHEBI:29985"/>
        <dbReference type="ChEBI" id="CHEBI:58359"/>
        <dbReference type="EC" id="3.5.1.2"/>
    </reaction>
</comment>
<comment type="pathway">
    <text evidence="1">Purine metabolism; IMP biosynthesis via de novo pathway; 5-amino-1-(5-phospho-D-ribosyl)imidazole from N(2)-formyl-N(1)-(5-phospho-D-ribosyl)glycinamide: step 1/2.</text>
</comment>
<comment type="subunit">
    <text evidence="1">Part of the FGAM synthase complex composed of 1 PurL, 1 PurQ and 2 PurS subunits.</text>
</comment>
<comment type="subcellular location">
    <subcellularLocation>
        <location evidence="1">Cytoplasm</location>
    </subcellularLocation>
</comment>
<keyword id="KW-0067">ATP-binding</keyword>
<keyword id="KW-0963">Cytoplasm</keyword>
<keyword id="KW-0315">Glutamine amidotransferase</keyword>
<keyword id="KW-0378">Hydrolase</keyword>
<keyword id="KW-0436">Ligase</keyword>
<keyword id="KW-0547">Nucleotide-binding</keyword>
<keyword id="KW-0658">Purine biosynthesis</keyword>